<organism>
    <name type="scientific">Mycobacterium avium</name>
    <dbReference type="NCBI Taxonomy" id="1764"/>
    <lineage>
        <taxon>Bacteria</taxon>
        <taxon>Bacillati</taxon>
        <taxon>Actinomycetota</taxon>
        <taxon>Actinomycetes</taxon>
        <taxon>Mycobacteriales</taxon>
        <taxon>Mycobacteriaceae</taxon>
        <taxon>Mycobacterium</taxon>
        <taxon>Mycobacterium avium complex (MAC)</taxon>
    </lineage>
</organism>
<accession>O52957</accession>
<dbReference type="EMBL" id="D78144">
    <property type="protein sequence ID" value="BAA24157.1"/>
    <property type="molecule type" value="Genomic_DNA"/>
</dbReference>
<dbReference type="SMR" id="O52957"/>
<dbReference type="GO" id="GO:0005576">
    <property type="term" value="C:extracellular region"/>
    <property type="evidence" value="ECO:0007669"/>
    <property type="project" value="UniProtKB-SubCell"/>
</dbReference>
<dbReference type="GO" id="GO:0016746">
    <property type="term" value="F:acyltransferase activity"/>
    <property type="evidence" value="ECO:0007669"/>
    <property type="project" value="UniProtKB-KW"/>
</dbReference>
<evidence type="ECO:0000250" key="1"/>
<evidence type="ECO:0000255" key="2"/>
<evidence type="ECO:0000305" key="3"/>
<feature type="signal peptide" evidence="2">
    <location>
        <begin position="1"/>
        <end position="38"/>
    </location>
</feature>
<feature type="chain" id="PRO_0000000227" description="MPT51 antigen">
    <location>
        <begin position="39"/>
        <end position="66" status="greater than"/>
    </location>
</feature>
<feature type="non-terminal residue">
    <location>
        <position position="66"/>
    </location>
</feature>
<keyword id="KW-0012">Acyltransferase</keyword>
<keyword id="KW-0964">Secreted</keyword>
<keyword id="KW-0732">Signal</keyword>
<keyword id="KW-0808">Transferase</keyword>
<reference key="1">
    <citation type="journal article" date="1997" name="Infect. Immun.">
        <title>Analysis of the genes encoding the antigen 85 complex and MPT51 from Mycobacterium avium.</title>
        <authorList>
            <person name="Ohara N."/>
            <person name="Ohara-Wada N."/>
            <person name="Kitaura H."/>
            <person name="Nishiyama T."/>
            <person name="Matsumoto S."/>
            <person name="Yamada T."/>
        </authorList>
    </citation>
    <scope>NUCLEOTIDE SEQUENCE [GENOMIC DNA]</scope>
</reference>
<gene>
    <name type="primary">mpt51</name>
</gene>
<proteinExistence type="inferred from homology"/>
<sequence>MTVVRGVSALLRVFCIAMLAAGLGVALQPAAVTGAARAAGYESLMVPSAAMGRDIPVAFLAGGPHA</sequence>
<name>MPT51_MYCAV</name>
<comment type="function">
    <text evidence="1">May have a role in host tissue attachment, whereby ligands may include the serum protein fibronectin and small sugars.</text>
</comment>
<comment type="subunit">
    <text evidence="1">Homodimer.</text>
</comment>
<comment type="subcellular location">
    <subcellularLocation>
        <location evidence="1">Secreted</location>
    </subcellularLocation>
</comment>
<comment type="similarity">
    <text evidence="3">Belongs to the mycobacterial A85 antigen family.</text>
</comment>
<protein>
    <recommendedName>
        <fullName>MPT51 antigen</fullName>
    </recommendedName>
</protein>